<dbReference type="EC" id="2.1.2.10" evidence="1"/>
<dbReference type="EMBL" id="AP006716">
    <property type="protein sequence ID" value="BAE04688.1"/>
    <property type="molecule type" value="Genomic_DNA"/>
</dbReference>
<dbReference type="RefSeq" id="WP_011275675.1">
    <property type="nucleotide sequence ID" value="NC_007168.1"/>
</dbReference>
<dbReference type="SMR" id="Q4L6N7"/>
<dbReference type="GeneID" id="93780778"/>
<dbReference type="KEGG" id="sha:SH1379"/>
<dbReference type="eggNOG" id="COG0404">
    <property type="taxonomic scope" value="Bacteria"/>
</dbReference>
<dbReference type="HOGENOM" id="CLU_007884_10_2_9"/>
<dbReference type="OrthoDB" id="9774591at2"/>
<dbReference type="Proteomes" id="UP000000543">
    <property type="component" value="Chromosome"/>
</dbReference>
<dbReference type="GO" id="GO:0005829">
    <property type="term" value="C:cytosol"/>
    <property type="evidence" value="ECO:0007669"/>
    <property type="project" value="TreeGrafter"/>
</dbReference>
<dbReference type="GO" id="GO:0005960">
    <property type="term" value="C:glycine cleavage complex"/>
    <property type="evidence" value="ECO:0007669"/>
    <property type="project" value="InterPro"/>
</dbReference>
<dbReference type="GO" id="GO:0004047">
    <property type="term" value="F:aminomethyltransferase activity"/>
    <property type="evidence" value="ECO:0007669"/>
    <property type="project" value="UniProtKB-UniRule"/>
</dbReference>
<dbReference type="GO" id="GO:0008483">
    <property type="term" value="F:transaminase activity"/>
    <property type="evidence" value="ECO:0007669"/>
    <property type="project" value="UniProtKB-KW"/>
</dbReference>
<dbReference type="GO" id="GO:0019464">
    <property type="term" value="P:glycine decarboxylation via glycine cleavage system"/>
    <property type="evidence" value="ECO:0007669"/>
    <property type="project" value="UniProtKB-UniRule"/>
</dbReference>
<dbReference type="FunFam" id="3.30.70.1400:FF:000001">
    <property type="entry name" value="Aminomethyltransferase"/>
    <property type="match status" value="1"/>
</dbReference>
<dbReference type="FunFam" id="4.10.1250.10:FF:000001">
    <property type="entry name" value="Aminomethyltransferase"/>
    <property type="match status" value="1"/>
</dbReference>
<dbReference type="Gene3D" id="2.40.30.110">
    <property type="entry name" value="Aminomethyltransferase beta-barrel domains"/>
    <property type="match status" value="1"/>
</dbReference>
<dbReference type="Gene3D" id="3.30.70.1400">
    <property type="entry name" value="Aminomethyltransferase beta-barrel domains"/>
    <property type="match status" value="1"/>
</dbReference>
<dbReference type="Gene3D" id="4.10.1250.10">
    <property type="entry name" value="Aminomethyltransferase fragment"/>
    <property type="match status" value="1"/>
</dbReference>
<dbReference type="Gene3D" id="3.30.1360.120">
    <property type="entry name" value="Probable tRNA modification gtpase trme, domain 1"/>
    <property type="match status" value="1"/>
</dbReference>
<dbReference type="HAMAP" id="MF_00259">
    <property type="entry name" value="GcvT"/>
    <property type="match status" value="1"/>
</dbReference>
<dbReference type="InterPro" id="IPR006223">
    <property type="entry name" value="GCS_T"/>
</dbReference>
<dbReference type="InterPro" id="IPR022903">
    <property type="entry name" value="GCS_T_bac"/>
</dbReference>
<dbReference type="InterPro" id="IPR013977">
    <property type="entry name" value="GCST_C"/>
</dbReference>
<dbReference type="InterPro" id="IPR006222">
    <property type="entry name" value="GCV_T_N"/>
</dbReference>
<dbReference type="InterPro" id="IPR028896">
    <property type="entry name" value="GcvT/YgfZ/DmdA"/>
</dbReference>
<dbReference type="InterPro" id="IPR029043">
    <property type="entry name" value="GcvT/YgfZ_C"/>
</dbReference>
<dbReference type="InterPro" id="IPR027266">
    <property type="entry name" value="TrmE/GcvT_dom1"/>
</dbReference>
<dbReference type="NCBIfam" id="TIGR00528">
    <property type="entry name" value="gcvT"/>
    <property type="match status" value="1"/>
</dbReference>
<dbReference type="NCBIfam" id="NF001567">
    <property type="entry name" value="PRK00389.1"/>
    <property type="match status" value="1"/>
</dbReference>
<dbReference type="PANTHER" id="PTHR43757">
    <property type="entry name" value="AMINOMETHYLTRANSFERASE"/>
    <property type="match status" value="1"/>
</dbReference>
<dbReference type="PANTHER" id="PTHR43757:SF2">
    <property type="entry name" value="AMINOMETHYLTRANSFERASE, MITOCHONDRIAL"/>
    <property type="match status" value="1"/>
</dbReference>
<dbReference type="Pfam" id="PF01571">
    <property type="entry name" value="GCV_T"/>
    <property type="match status" value="1"/>
</dbReference>
<dbReference type="Pfam" id="PF08669">
    <property type="entry name" value="GCV_T_C"/>
    <property type="match status" value="1"/>
</dbReference>
<dbReference type="PIRSF" id="PIRSF006487">
    <property type="entry name" value="GcvT"/>
    <property type="match status" value="1"/>
</dbReference>
<dbReference type="SUPFAM" id="SSF101790">
    <property type="entry name" value="Aminomethyltransferase beta-barrel domain"/>
    <property type="match status" value="1"/>
</dbReference>
<dbReference type="SUPFAM" id="SSF103025">
    <property type="entry name" value="Folate-binding domain"/>
    <property type="match status" value="1"/>
</dbReference>
<evidence type="ECO:0000255" key="1">
    <source>
        <dbReference type="HAMAP-Rule" id="MF_00259"/>
    </source>
</evidence>
<keyword id="KW-0032">Aminotransferase</keyword>
<keyword id="KW-0808">Transferase</keyword>
<accession>Q4L6N7</accession>
<proteinExistence type="inferred from homology"/>
<name>GCST_STAHJ</name>
<protein>
    <recommendedName>
        <fullName evidence="1">Aminomethyltransferase</fullName>
        <ecNumber evidence="1">2.1.2.10</ecNumber>
    </recommendedName>
    <alternativeName>
        <fullName evidence="1">Glycine cleavage system T protein</fullName>
    </alternativeName>
</protein>
<sequence length="363" mass="40102">MTSELKKTPLYQNYVDSGAKIVEFGGWAMPVQFTSIKEEHNAVRYEVGMFDVSHMGEISIKGNDASKFVQYLLSNDTNNLTDTKAQYTALCNEEGGIIDDLVTYKIGDNDYLLIVNAANTDKDFAWVQKHAPKFDVEVSNVSNQFGQLAVQGPKARDLVSGLVDIDVSEMKPFDFQQNVTLFGKNVILSQSGYTGEDGFEIYCEAKDTVDIWNGFIEHNVVPCGLGARDTLRLEAGLPLHGQDLTESITPYEGGIAFAAKPLIEEDFIGKSVLKDQKENGSERRTVGLELLDKGIARTGYPVLDLDGNEIGEVTSGTQAPSSGKSIAMAIIKRDEFEMGRELLVQVRKRQLKAKIVKKNQIEK</sequence>
<reference key="1">
    <citation type="journal article" date="2005" name="J. Bacteriol.">
        <title>Whole-genome sequencing of Staphylococcus haemolyticus uncovers the extreme plasticity of its genome and the evolution of human-colonizing staphylococcal species.</title>
        <authorList>
            <person name="Takeuchi F."/>
            <person name="Watanabe S."/>
            <person name="Baba T."/>
            <person name="Yuzawa H."/>
            <person name="Ito T."/>
            <person name="Morimoto Y."/>
            <person name="Kuroda M."/>
            <person name="Cui L."/>
            <person name="Takahashi M."/>
            <person name="Ankai A."/>
            <person name="Baba S."/>
            <person name="Fukui S."/>
            <person name="Lee J.C."/>
            <person name="Hiramatsu K."/>
        </authorList>
    </citation>
    <scope>NUCLEOTIDE SEQUENCE [LARGE SCALE GENOMIC DNA]</scope>
    <source>
        <strain>JCSC1435</strain>
    </source>
</reference>
<organism>
    <name type="scientific">Staphylococcus haemolyticus (strain JCSC1435)</name>
    <dbReference type="NCBI Taxonomy" id="279808"/>
    <lineage>
        <taxon>Bacteria</taxon>
        <taxon>Bacillati</taxon>
        <taxon>Bacillota</taxon>
        <taxon>Bacilli</taxon>
        <taxon>Bacillales</taxon>
        <taxon>Staphylococcaceae</taxon>
        <taxon>Staphylococcus</taxon>
    </lineage>
</organism>
<gene>
    <name evidence="1" type="primary">gcvT</name>
    <name type="ordered locus">SH1379</name>
</gene>
<comment type="function">
    <text evidence="1">The glycine cleavage system catalyzes the degradation of glycine.</text>
</comment>
<comment type="catalytic activity">
    <reaction evidence="1">
        <text>N(6)-[(R)-S(8)-aminomethyldihydrolipoyl]-L-lysyl-[protein] + (6S)-5,6,7,8-tetrahydrofolate = N(6)-[(R)-dihydrolipoyl]-L-lysyl-[protein] + (6R)-5,10-methylene-5,6,7,8-tetrahydrofolate + NH4(+)</text>
        <dbReference type="Rhea" id="RHEA:16945"/>
        <dbReference type="Rhea" id="RHEA-COMP:10475"/>
        <dbReference type="Rhea" id="RHEA-COMP:10492"/>
        <dbReference type="ChEBI" id="CHEBI:15636"/>
        <dbReference type="ChEBI" id="CHEBI:28938"/>
        <dbReference type="ChEBI" id="CHEBI:57453"/>
        <dbReference type="ChEBI" id="CHEBI:83100"/>
        <dbReference type="ChEBI" id="CHEBI:83143"/>
        <dbReference type="EC" id="2.1.2.10"/>
    </reaction>
</comment>
<comment type="subunit">
    <text evidence="1">The glycine cleavage system is composed of four proteins: P, T, L and H.</text>
</comment>
<comment type="similarity">
    <text evidence="1">Belongs to the GcvT family.</text>
</comment>
<feature type="chain" id="PRO_1000047717" description="Aminomethyltransferase">
    <location>
        <begin position="1"/>
        <end position="363"/>
    </location>
</feature>